<gene>
    <name evidence="1" type="primary">lpxK</name>
    <name type="ordered locus">Meso_0439</name>
</gene>
<proteinExistence type="inferred from homology"/>
<evidence type="ECO:0000255" key="1">
    <source>
        <dbReference type="HAMAP-Rule" id="MF_00409"/>
    </source>
</evidence>
<comment type="function">
    <text evidence="1">Transfers the gamma-phosphate of ATP to the 4'-position of a tetraacyldisaccharide 1-phosphate intermediate (termed DS-1-P) to form tetraacyldisaccharide 1,4'-bis-phosphate (lipid IVA).</text>
</comment>
<comment type="catalytic activity">
    <reaction evidence="1">
        <text>a lipid A disaccharide + ATP = a lipid IVA + ADP + H(+)</text>
        <dbReference type="Rhea" id="RHEA:67840"/>
        <dbReference type="ChEBI" id="CHEBI:15378"/>
        <dbReference type="ChEBI" id="CHEBI:30616"/>
        <dbReference type="ChEBI" id="CHEBI:176343"/>
        <dbReference type="ChEBI" id="CHEBI:176425"/>
        <dbReference type="ChEBI" id="CHEBI:456216"/>
        <dbReference type="EC" id="2.7.1.130"/>
    </reaction>
</comment>
<comment type="pathway">
    <text evidence="1">Glycolipid biosynthesis; lipid IV(A) biosynthesis; lipid IV(A) from (3R)-3-hydroxytetradecanoyl-[acyl-carrier-protein] and UDP-N-acetyl-alpha-D-glucosamine: step 6/6.</text>
</comment>
<comment type="similarity">
    <text evidence="1">Belongs to the LpxK family.</text>
</comment>
<reference key="1">
    <citation type="submission" date="2006-06" db="EMBL/GenBank/DDBJ databases">
        <title>Complete sequence of chromosome of Mesorhizobium sp. BNC1.</title>
        <authorList>
            <consortium name="US DOE Joint Genome Institute"/>
            <person name="Copeland A."/>
            <person name="Lucas S."/>
            <person name="Lapidus A."/>
            <person name="Barry K."/>
            <person name="Detter J.C."/>
            <person name="Glavina del Rio T."/>
            <person name="Hammon N."/>
            <person name="Israni S."/>
            <person name="Dalin E."/>
            <person name="Tice H."/>
            <person name="Pitluck S."/>
            <person name="Chertkov O."/>
            <person name="Brettin T."/>
            <person name="Bruce D."/>
            <person name="Han C."/>
            <person name="Tapia R."/>
            <person name="Gilna P."/>
            <person name="Schmutz J."/>
            <person name="Larimer F."/>
            <person name="Land M."/>
            <person name="Hauser L."/>
            <person name="Kyrpides N."/>
            <person name="Mikhailova N."/>
            <person name="Richardson P."/>
        </authorList>
    </citation>
    <scope>NUCLEOTIDE SEQUENCE [LARGE SCALE GENOMIC DNA]</scope>
    <source>
        <strain>BNC1</strain>
    </source>
</reference>
<organism>
    <name type="scientific">Chelativorans sp. (strain BNC1)</name>
    <dbReference type="NCBI Taxonomy" id="266779"/>
    <lineage>
        <taxon>Bacteria</taxon>
        <taxon>Pseudomonadati</taxon>
        <taxon>Pseudomonadota</taxon>
        <taxon>Alphaproteobacteria</taxon>
        <taxon>Hyphomicrobiales</taxon>
        <taxon>Phyllobacteriaceae</taxon>
        <taxon>Chelativorans</taxon>
    </lineage>
</organism>
<dbReference type="EC" id="2.7.1.130" evidence="1"/>
<dbReference type="EMBL" id="CP000390">
    <property type="protein sequence ID" value="ABG61843.1"/>
    <property type="molecule type" value="Genomic_DNA"/>
</dbReference>
<dbReference type="SMR" id="Q11L82"/>
<dbReference type="STRING" id="266779.Meso_0439"/>
<dbReference type="KEGG" id="mes:Meso_0439"/>
<dbReference type="eggNOG" id="COG1663">
    <property type="taxonomic scope" value="Bacteria"/>
</dbReference>
<dbReference type="HOGENOM" id="CLU_038816_0_0_5"/>
<dbReference type="OrthoDB" id="9766423at2"/>
<dbReference type="UniPathway" id="UPA00359">
    <property type="reaction ID" value="UER00482"/>
</dbReference>
<dbReference type="GO" id="GO:0005886">
    <property type="term" value="C:plasma membrane"/>
    <property type="evidence" value="ECO:0007669"/>
    <property type="project" value="TreeGrafter"/>
</dbReference>
<dbReference type="GO" id="GO:0005524">
    <property type="term" value="F:ATP binding"/>
    <property type="evidence" value="ECO:0007669"/>
    <property type="project" value="UniProtKB-UniRule"/>
</dbReference>
<dbReference type="GO" id="GO:0009029">
    <property type="term" value="F:tetraacyldisaccharide 4'-kinase activity"/>
    <property type="evidence" value="ECO:0007669"/>
    <property type="project" value="UniProtKB-UniRule"/>
</dbReference>
<dbReference type="GO" id="GO:0009245">
    <property type="term" value="P:lipid A biosynthetic process"/>
    <property type="evidence" value="ECO:0007669"/>
    <property type="project" value="UniProtKB-UniRule"/>
</dbReference>
<dbReference type="GO" id="GO:0009244">
    <property type="term" value="P:lipopolysaccharide core region biosynthetic process"/>
    <property type="evidence" value="ECO:0007669"/>
    <property type="project" value="TreeGrafter"/>
</dbReference>
<dbReference type="HAMAP" id="MF_00409">
    <property type="entry name" value="LpxK"/>
    <property type="match status" value="1"/>
</dbReference>
<dbReference type="InterPro" id="IPR003758">
    <property type="entry name" value="LpxK"/>
</dbReference>
<dbReference type="InterPro" id="IPR027417">
    <property type="entry name" value="P-loop_NTPase"/>
</dbReference>
<dbReference type="NCBIfam" id="TIGR00682">
    <property type="entry name" value="lpxK"/>
    <property type="match status" value="1"/>
</dbReference>
<dbReference type="PANTHER" id="PTHR42724">
    <property type="entry name" value="TETRAACYLDISACCHARIDE 4'-KINASE"/>
    <property type="match status" value="1"/>
</dbReference>
<dbReference type="PANTHER" id="PTHR42724:SF1">
    <property type="entry name" value="TETRAACYLDISACCHARIDE 4'-KINASE, MITOCHONDRIAL-RELATED"/>
    <property type="match status" value="1"/>
</dbReference>
<dbReference type="Pfam" id="PF02606">
    <property type="entry name" value="LpxK"/>
    <property type="match status" value="1"/>
</dbReference>
<dbReference type="SUPFAM" id="SSF52540">
    <property type="entry name" value="P-loop containing nucleoside triphosphate hydrolases"/>
    <property type="match status" value="1"/>
</dbReference>
<feature type="chain" id="PRO_0000291214" description="Tetraacyldisaccharide 4'-kinase">
    <location>
        <begin position="1"/>
        <end position="343"/>
    </location>
</feature>
<feature type="binding site" evidence="1">
    <location>
        <begin position="55"/>
        <end position="62"/>
    </location>
    <ligand>
        <name>ATP</name>
        <dbReference type="ChEBI" id="CHEBI:30616"/>
    </ligand>
</feature>
<name>LPXK_CHESB</name>
<protein>
    <recommendedName>
        <fullName evidence="1">Tetraacyldisaccharide 4'-kinase</fullName>
        <ecNumber evidence="1">2.7.1.130</ecNumber>
    </recommendedName>
    <alternativeName>
        <fullName evidence="1">Lipid A 4'-kinase</fullName>
    </alternativeName>
</protein>
<keyword id="KW-0067">ATP-binding</keyword>
<keyword id="KW-0418">Kinase</keyword>
<keyword id="KW-0441">Lipid A biosynthesis</keyword>
<keyword id="KW-0444">Lipid biosynthesis</keyword>
<keyword id="KW-0443">Lipid metabolism</keyword>
<keyword id="KW-0547">Nucleotide-binding</keyword>
<keyword id="KW-0808">Transferase</keyword>
<sequence>MAASEAPPFWWEKPDWRAWALWPLSSAYGFAASARLRAAKREKIPAAVLCIGNLTVGGEGKTPIAIALARHAMRKGLTVGFLSRGYGGSHFKPHIVSPEDDSARAVGDEPLLLARQALTVISRDRAAGARRLVQAGCNLIIMDDGFQSARLHMDYALIVVDAMRGLGNGHVFPAGPMRAPLTEQMRFADGVVTMGEGDAADIVVRSASRAGRPVYSARIRPRSRNGLKGKRVLAFAGIGNPRKFYATLKACGADIVLERSFPDHHLFTEEDVSELSREAAKESLLLVTTEKDFVRLQNSMQPMRDFAASVQALKVEAVFDEPGAPDAIINAAQQAWRERMLKR</sequence>
<accession>Q11L82</accession>